<dbReference type="SMR" id="P81108"/>
<dbReference type="Gene3D" id="3.40.30.10">
    <property type="entry name" value="Glutaredoxin"/>
    <property type="match status" value="1"/>
</dbReference>
<dbReference type="InterPro" id="IPR036249">
    <property type="entry name" value="Thioredoxin-like_sf"/>
</dbReference>
<dbReference type="InterPro" id="IPR017937">
    <property type="entry name" value="Thioredoxin_CS"/>
</dbReference>
<dbReference type="InterPro" id="IPR013766">
    <property type="entry name" value="Thioredoxin_domain"/>
</dbReference>
<dbReference type="Pfam" id="PF00085">
    <property type="entry name" value="Thioredoxin"/>
    <property type="match status" value="1"/>
</dbReference>
<dbReference type="SUPFAM" id="SSF52833">
    <property type="entry name" value="Thioredoxin-like"/>
    <property type="match status" value="1"/>
</dbReference>
<dbReference type="PROSITE" id="PS00194">
    <property type="entry name" value="THIOREDOXIN_1"/>
    <property type="match status" value="1"/>
</dbReference>
<name>THIO_CLOSG</name>
<keyword id="KW-0903">Direct protein sequencing</keyword>
<keyword id="KW-1015">Disulfide bond</keyword>
<keyword id="KW-0249">Electron transport</keyword>
<keyword id="KW-0676">Redox-active center</keyword>
<keyword id="KW-0813">Transport</keyword>
<sequence length="40" mass="4525">MLVLDKKTFEEEVLKTKGYVLVDYFGDGCVPCEALMPDVE</sequence>
<comment type="function">
    <text>Participates in various redox reactions through the reversible oxidation of its active center dithiol to a disulfide and catalyzes dithiol-disulfide exchange reactions.</text>
</comment>
<comment type="similarity">
    <text evidence="2">Belongs to the thioredoxin family.</text>
</comment>
<reference key="1">
    <citation type="journal article" date="1998" name="Microbiology">
        <title>Fast purification of thioredoxin reductases and of thioredoxins with an unusual redox-active centre from anaerobic, amino-acid-utilizing bacteria.</title>
        <authorList>
            <person name="Harms C."/>
            <person name="Meyer M.A."/>
            <person name="Andreesen J.R."/>
        </authorList>
    </citation>
    <scope>PROTEIN SEQUENCE</scope>
    <source>
        <strain>DSM 633 / W28delta</strain>
    </source>
</reference>
<proteinExistence type="evidence at protein level"/>
<organism>
    <name type="scientific">Clostridium sporogenes</name>
    <dbReference type="NCBI Taxonomy" id="1509"/>
    <lineage>
        <taxon>Bacteria</taxon>
        <taxon>Bacillati</taxon>
        <taxon>Bacillota</taxon>
        <taxon>Clostridia</taxon>
        <taxon>Eubacteriales</taxon>
        <taxon>Clostridiaceae</taxon>
        <taxon>Clostridium</taxon>
    </lineage>
</organism>
<evidence type="ECO:0000250" key="1"/>
<evidence type="ECO:0000305" key="2"/>
<gene>
    <name type="primary">trxA</name>
</gene>
<accession>P81108</accession>
<feature type="chain" id="PRO_0000120091" description="Thioredoxin">
    <location>
        <begin position="1"/>
        <end position="40" status="greater than"/>
    </location>
</feature>
<feature type="disulfide bond" description="Redox-active" evidence="1">
    <location>
        <begin position="29"/>
        <end position="32"/>
    </location>
</feature>
<feature type="non-terminal residue">
    <location>
        <position position="40"/>
    </location>
</feature>
<protein>
    <recommendedName>
        <fullName>Thioredoxin</fullName>
        <shortName>Trx</shortName>
    </recommendedName>
</protein>